<organism>
    <name type="scientific">Aspergillus fumigatus (strain ATCC MYA-4609 / CBS 101355 / FGSC A1100 / Af293)</name>
    <name type="common">Neosartorya fumigata</name>
    <dbReference type="NCBI Taxonomy" id="330879"/>
    <lineage>
        <taxon>Eukaryota</taxon>
        <taxon>Fungi</taxon>
        <taxon>Dikarya</taxon>
        <taxon>Ascomycota</taxon>
        <taxon>Pezizomycotina</taxon>
        <taxon>Eurotiomycetes</taxon>
        <taxon>Eurotiomycetidae</taxon>
        <taxon>Eurotiales</taxon>
        <taxon>Aspergillaceae</taxon>
        <taxon>Aspergillus</taxon>
        <taxon>Aspergillus subgen. Fumigati</taxon>
    </lineage>
</organism>
<keyword id="KW-0004">4Fe-4S</keyword>
<keyword id="KW-0408">Iron</keyword>
<keyword id="KW-0411">Iron-sulfur</keyword>
<keyword id="KW-0479">Metal-binding</keyword>
<keyword id="KW-0496">Mitochondrion</keyword>
<keyword id="KW-1185">Reference proteome</keyword>
<keyword id="KW-0949">S-adenosyl-L-methionine</keyword>
<keyword id="KW-0808">Transferase</keyword>
<keyword id="KW-0809">Transit peptide</keyword>
<gene>
    <name type="ORF">AFUA_3G06560</name>
</gene>
<evidence type="ECO:0000255" key="1">
    <source>
        <dbReference type="HAMAP-Rule" id="MF_03123"/>
    </source>
</evidence>
<evidence type="ECO:0000255" key="2">
    <source>
        <dbReference type="PROSITE-ProRule" id="PRU01266"/>
    </source>
</evidence>
<evidence type="ECO:0000256" key="3">
    <source>
        <dbReference type="SAM" id="MobiDB-lite"/>
    </source>
</evidence>
<reference key="1">
    <citation type="journal article" date="2005" name="Nature">
        <title>Genomic sequence of the pathogenic and allergenic filamentous fungus Aspergillus fumigatus.</title>
        <authorList>
            <person name="Nierman W.C."/>
            <person name="Pain A."/>
            <person name="Anderson M.J."/>
            <person name="Wortman J.R."/>
            <person name="Kim H.S."/>
            <person name="Arroyo J."/>
            <person name="Berriman M."/>
            <person name="Abe K."/>
            <person name="Archer D.B."/>
            <person name="Bermejo C."/>
            <person name="Bennett J.W."/>
            <person name="Bowyer P."/>
            <person name="Chen D."/>
            <person name="Collins M."/>
            <person name="Coulsen R."/>
            <person name="Davies R."/>
            <person name="Dyer P.S."/>
            <person name="Farman M.L."/>
            <person name="Fedorova N."/>
            <person name="Fedorova N.D."/>
            <person name="Feldblyum T.V."/>
            <person name="Fischer R."/>
            <person name="Fosker N."/>
            <person name="Fraser A."/>
            <person name="Garcia J.L."/>
            <person name="Garcia M.J."/>
            <person name="Goble A."/>
            <person name="Goldman G.H."/>
            <person name="Gomi K."/>
            <person name="Griffith-Jones S."/>
            <person name="Gwilliam R."/>
            <person name="Haas B.J."/>
            <person name="Haas H."/>
            <person name="Harris D.E."/>
            <person name="Horiuchi H."/>
            <person name="Huang J."/>
            <person name="Humphray S."/>
            <person name="Jimenez J."/>
            <person name="Keller N."/>
            <person name="Khouri H."/>
            <person name="Kitamoto K."/>
            <person name="Kobayashi T."/>
            <person name="Konzack S."/>
            <person name="Kulkarni R."/>
            <person name="Kumagai T."/>
            <person name="Lafton A."/>
            <person name="Latge J.-P."/>
            <person name="Li W."/>
            <person name="Lord A."/>
            <person name="Lu C."/>
            <person name="Majoros W.H."/>
            <person name="May G.S."/>
            <person name="Miller B.L."/>
            <person name="Mohamoud Y."/>
            <person name="Molina M."/>
            <person name="Monod M."/>
            <person name="Mouyna I."/>
            <person name="Mulligan S."/>
            <person name="Murphy L.D."/>
            <person name="O'Neil S."/>
            <person name="Paulsen I."/>
            <person name="Penalva M.A."/>
            <person name="Pertea M."/>
            <person name="Price C."/>
            <person name="Pritchard B.L."/>
            <person name="Quail M.A."/>
            <person name="Rabbinowitsch E."/>
            <person name="Rawlins N."/>
            <person name="Rajandream M.A."/>
            <person name="Reichard U."/>
            <person name="Renauld H."/>
            <person name="Robson G.D."/>
            <person name="Rodriguez de Cordoba S."/>
            <person name="Rodriguez-Pena J.M."/>
            <person name="Ronning C.M."/>
            <person name="Rutter S."/>
            <person name="Salzberg S.L."/>
            <person name="Sanchez M."/>
            <person name="Sanchez-Ferrero J.C."/>
            <person name="Saunders D."/>
            <person name="Seeger K."/>
            <person name="Squares R."/>
            <person name="Squares S."/>
            <person name="Takeuchi M."/>
            <person name="Tekaia F."/>
            <person name="Turner G."/>
            <person name="Vazquez de Aldana C.R."/>
            <person name="Weidman J."/>
            <person name="White O."/>
            <person name="Woodward J.R."/>
            <person name="Yu J.-H."/>
            <person name="Fraser C.M."/>
            <person name="Galagan J.E."/>
            <person name="Asai K."/>
            <person name="Machida M."/>
            <person name="Hall N."/>
            <person name="Barrell B.G."/>
            <person name="Denning D.W."/>
        </authorList>
    </citation>
    <scope>NUCLEOTIDE SEQUENCE [LARGE SCALE GENOMIC DNA]</scope>
    <source>
        <strain>ATCC MYA-4609 / CBS 101355 / FGSC A1100 / Af293</strain>
    </source>
</reference>
<accession>Q4WWP1</accession>
<proteinExistence type="inferred from homology"/>
<sequence>MAVSTSHFRSLCASRPLSRTAIVGHISCRSYATTEPSPSATSTSTTTTARRRTTFKDKLNAGPSFADFVGNGNTPLDPSEAYALKTALVGPAGRKKEMTRLPSWLKTPIPDSKNYQRLKKDLRGLNLHTVCEEARCPNISDCWGGSDKSAATATIMLMGDTCTRGCRFCSVKTSRTPAPLDPHEPENTAEAISRWGLGYVVLTSVDRDDLADGGARHFAETVMKIKQKAPSILVECLTGDYAGDLEMVKLVARSGLDVYAHNVETVEALTPQVRDRRANFQQSIRVLEAAKNAQPSLITKTSLMLGLGETDDQLWDALRQLRAANVDVVTFGQYMRPTKRHMAVHEYVTPDRFELWRQRALDMGFLYCASGPLVRSSYKAGEAFIENVLKKRRATSGGTETVGVRPVTVDEVTR</sequence>
<protein>
    <recommendedName>
        <fullName evidence="1">Lipoyl synthase, mitochondrial</fullName>
        <ecNumber evidence="1">2.8.1.8</ecNumber>
    </recommendedName>
    <alternativeName>
        <fullName evidence="1">Lipoate synthase</fullName>
        <shortName evidence="1">LS</shortName>
        <shortName evidence="1">Lip-syn</shortName>
    </alternativeName>
    <alternativeName>
        <fullName evidence="1">Lipoic acid synthase</fullName>
    </alternativeName>
</protein>
<name>LIPA_ASPFU</name>
<feature type="transit peptide" description="Mitochondrion" evidence="1">
    <location>
        <begin position="1"/>
        <end position="31"/>
    </location>
</feature>
<feature type="chain" id="PRO_0000398253" description="Lipoyl synthase, mitochondrial">
    <location>
        <begin position="32"/>
        <end position="414"/>
    </location>
</feature>
<feature type="domain" description="Radical SAM core" evidence="2">
    <location>
        <begin position="145"/>
        <end position="366"/>
    </location>
</feature>
<feature type="region of interest" description="Disordered" evidence="3">
    <location>
        <begin position="31"/>
        <end position="51"/>
    </location>
</feature>
<feature type="compositionally biased region" description="Low complexity" evidence="3">
    <location>
        <begin position="32"/>
        <end position="48"/>
    </location>
</feature>
<feature type="binding site" evidence="1">
    <location>
        <position position="131"/>
    </location>
    <ligand>
        <name>[4Fe-4S] cluster</name>
        <dbReference type="ChEBI" id="CHEBI:49883"/>
        <label>1</label>
    </ligand>
</feature>
<feature type="binding site" evidence="1">
    <location>
        <position position="136"/>
    </location>
    <ligand>
        <name>[4Fe-4S] cluster</name>
        <dbReference type="ChEBI" id="CHEBI:49883"/>
        <label>1</label>
    </ligand>
</feature>
<feature type="binding site" evidence="1">
    <location>
        <position position="142"/>
    </location>
    <ligand>
        <name>[4Fe-4S] cluster</name>
        <dbReference type="ChEBI" id="CHEBI:49883"/>
        <label>1</label>
    </ligand>
</feature>
<feature type="binding site" evidence="1">
    <location>
        <position position="162"/>
    </location>
    <ligand>
        <name>[4Fe-4S] cluster</name>
        <dbReference type="ChEBI" id="CHEBI:49883"/>
        <label>2</label>
        <note>4Fe-4S-S-AdoMet</note>
    </ligand>
</feature>
<feature type="binding site" evidence="1">
    <location>
        <position position="166"/>
    </location>
    <ligand>
        <name>[4Fe-4S] cluster</name>
        <dbReference type="ChEBI" id="CHEBI:49883"/>
        <label>2</label>
        <note>4Fe-4S-S-AdoMet</note>
    </ligand>
</feature>
<feature type="binding site" evidence="1">
    <location>
        <position position="169"/>
    </location>
    <ligand>
        <name>[4Fe-4S] cluster</name>
        <dbReference type="ChEBI" id="CHEBI:49883"/>
        <label>2</label>
        <note>4Fe-4S-S-AdoMet</note>
    </ligand>
</feature>
<feature type="binding site" evidence="1">
    <location>
        <position position="377"/>
    </location>
    <ligand>
        <name>[4Fe-4S] cluster</name>
        <dbReference type="ChEBI" id="CHEBI:49883"/>
        <label>1</label>
    </ligand>
</feature>
<dbReference type="EC" id="2.8.1.8" evidence="1"/>
<dbReference type="EMBL" id="AAHF01000002">
    <property type="protein sequence ID" value="EAL92912.1"/>
    <property type="molecule type" value="Genomic_DNA"/>
</dbReference>
<dbReference type="RefSeq" id="XP_754950.1">
    <property type="nucleotide sequence ID" value="XM_749857.1"/>
</dbReference>
<dbReference type="SMR" id="Q4WWP1"/>
<dbReference type="FunCoup" id="Q4WWP1">
    <property type="interactions" value="576"/>
</dbReference>
<dbReference type="STRING" id="330879.Q4WWP1"/>
<dbReference type="EnsemblFungi" id="EAL92912">
    <property type="protein sequence ID" value="EAL92912"/>
    <property type="gene ID" value="AFUA_3G06560"/>
</dbReference>
<dbReference type="GeneID" id="3512565"/>
<dbReference type="KEGG" id="afm:AFUA_3G06560"/>
<dbReference type="VEuPathDB" id="FungiDB:Afu3g06560"/>
<dbReference type="eggNOG" id="KOG2672">
    <property type="taxonomic scope" value="Eukaryota"/>
</dbReference>
<dbReference type="HOGENOM" id="CLU_033144_0_1_1"/>
<dbReference type="InParanoid" id="Q4WWP1"/>
<dbReference type="OMA" id="PYCDIDF"/>
<dbReference type="OrthoDB" id="3231at2759"/>
<dbReference type="UniPathway" id="UPA00538">
    <property type="reaction ID" value="UER00593"/>
</dbReference>
<dbReference type="Proteomes" id="UP000002530">
    <property type="component" value="Chromosome 3"/>
</dbReference>
<dbReference type="GO" id="GO:0005739">
    <property type="term" value="C:mitochondrion"/>
    <property type="evidence" value="ECO:0000318"/>
    <property type="project" value="GO_Central"/>
</dbReference>
<dbReference type="GO" id="GO:0051539">
    <property type="term" value="F:4 iron, 4 sulfur cluster binding"/>
    <property type="evidence" value="ECO:0007669"/>
    <property type="project" value="UniProtKB-UniRule"/>
</dbReference>
<dbReference type="GO" id="GO:0016992">
    <property type="term" value="F:lipoate synthase activity"/>
    <property type="evidence" value="ECO:0000318"/>
    <property type="project" value="GO_Central"/>
</dbReference>
<dbReference type="GO" id="GO:0046872">
    <property type="term" value="F:metal ion binding"/>
    <property type="evidence" value="ECO:0007669"/>
    <property type="project" value="UniProtKB-KW"/>
</dbReference>
<dbReference type="GO" id="GO:0009107">
    <property type="term" value="P:lipoate biosynthetic process"/>
    <property type="evidence" value="ECO:0000318"/>
    <property type="project" value="GO_Central"/>
</dbReference>
<dbReference type="CDD" id="cd01335">
    <property type="entry name" value="Radical_SAM"/>
    <property type="match status" value="1"/>
</dbReference>
<dbReference type="FunFam" id="3.20.20.70:FF:000036">
    <property type="entry name" value="Lipoyl synthase, mitochondrial"/>
    <property type="match status" value="1"/>
</dbReference>
<dbReference type="Gene3D" id="3.20.20.70">
    <property type="entry name" value="Aldolase class I"/>
    <property type="match status" value="1"/>
</dbReference>
<dbReference type="HAMAP" id="MF_00206">
    <property type="entry name" value="Lipoyl_synth"/>
    <property type="match status" value="1"/>
</dbReference>
<dbReference type="InterPro" id="IPR013785">
    <property type="entry name" value="Aldolase_TIM"/>
</dbReference>
<dbReference type="InterPro" id="IPR006638">
    <property type="entry name" value="Elp3/MiaA/NifB-like_rSAM"/>
</dbReference>
<dbReference type="InterPro" id="IPR031691">
    <property type="entry name" value="LIAS_N"/>
</dbReference>
<dbReference type="InterPro" id="IPR003698">
    <property type="entry name" value="Lipoyl_synth"/>
</dbReference>
<dbReference type="InterPro" id="IPR007197">
    <property type="entry name" value="rSAM"/>
</dbReference>
<dbReference type="NCBIfam" id="TIGR00510">
    <property type="entry name" value="lipA"/>
    <property type="match status" value="1"/>
</dbReference>
<dbReference type="NCBIfam" id="NF004019">
    <property type="entry name" value="PRK05481.1"/>
    <property type="match status" value="1"/>
</dbReference>
<dbReference type="NCBIfam" id="NF009544">
    <property type="entry name" value="PRK12928.1"/>
    <property type="match status" value="1"/>
</dbReference>
<dbReference type="PANTHER" id="PTHR10949">
    <property type="entry name" value="LIPOYL SYNTHASE"/>
    <property type="match status" value="1"/>
</dbReference>
<dbReference type="PANTHER" id="PTHR10949:SF0">
    <property type="entry name" value="LIPOYL SYNTHASE, MITOCHONDRIAL"/>
    <property type="match status" value="1"/>
</dbReference>
<dbReference type="Pfam" id="PF16881">
    <property type="entry name" value="LIAS_N"/>
    <property type="match status" value="1"/>
</dbReference>
<dbReference type="Pfam" id="PF04055">
    <property type="entry name" value="Radical_SAM"/>
    <property type="match status" value="1"/>
</dbReference>
<dbReference type="SFLD" id="SFLDF00271">
    <property type="entry name" value="lipoyl_synthase"/>
    <property type="match status" value="1"/>
</dbReference>
<dbReference type="SFLD" id="SFLDS00029">
    <property type="entry name" value="Radical_SAM"/>
    <property type="match status" value="1"/>
</dbReference>
<dbReference type="SMART" id="SM00729">
    <property type="entry name" value="Elp3"/>
    <property type="match status" value="1"/>
</dbReference>
<dbReference type="SUPFAM" id="SSF102114">
    <property type="entry name" value="Radical SAM enzymes"/>
    <property type="match status" value="1"/>
</dbReference>
<dbReference type="PROSITE" id="PS51918">
    <property type="entry name" value="RADICAL_SAM"/>
    <property type="match status" value="1"/>
</dbReference>
<comment type="function">
    <text evidence="1">Catalyzes the radical-mediated insertion of two sulfur atoms into the C-6 and C-8 positions of the octanoyl moiety bound to the lipoyl domains of lipoate-dependent enzymes, thereby converting the octanoylated domains into lipoylated derivatives.</text>
</comment>
<comment type="catalytic activity">
    <reaction evidence="1">
        <text>[[Fe-S] cluster scaffold protein carrying a second [4Fe-4S](2+) cluster] + N(6)-octanoyl-L-lysyl-[protein] + 2 oxidized [2Fe-2S]-[ferredoxin] + 2 S-adenosyl-L-methionine + 4 H(+) = [[Fe-S] cluster scaffold protein] + N(6)-[(R)-dihydrolipoyl]-L-lysyl-[protein] + 4 Fe(3+) + 2 hydrogen sulfide + 2 5'-deoxyadenosine + 2 L-methionine + 2 reduced [2Fe-2S]-[ferredoxin]</text>
        <dbReference type="Rhea" id="RHEA:16585"/>
        <dbReference type="Rhea" id="RHEA-COMP:9928"/>
        <dbReference type="Rhea" id="RHEA-COMP:10000"/>
        <dbReference type="Rhea" id="RHEA-COMP:10001"/>
        <dbReference type="Rhea" id="RHEA-COMP:10475"/>
        <dbReference type="Rhea" id="RHEA-COMP:14568"/>
        <dbReference type="Rhea" id="RHEA-COMP:14569"/>
        <dbReference type="ChEBI" id="CHEBI:15378"/>
        <dbReference type="ChEBI" id="CHEBI:17319"/>
        <dbReference type="ChEBI" id="CHEBI:29034"/>
        <dbReference type="ChEBI" id="CHEBI:29919"/>
        <dbReference type="ChEBI" id="CHEBI:33722"/>
        <dbReference type="ChEBI" id="CHEBI:33737"/>
        <dbReference type="ChEBI" id="CHEBI:33738"/>
        <dbReference type="ChEBI" id="CHEBI:57844"/>
        <dbReference type="ChEBI" id="CHEBI:59789"/>
        <dbReference type="ChEBI" id="CHEBI:78809"/>
        <dbReference type="ChEBI" id="CHEBI:83100"/>
        <dbReference type="EC" id="2.8.1.8"/>
    </reaction>
</comment>
<comment type="cofactor">
    <cofactor evidence="1">
        <name>[4Fe-4S] cluster</name>
        <dbReference type="ChEBI" id="CHEBI:49883"/>
    </cofactor>
    <text evidence="1">Binds 2 [4Fe-4S] clusters per subunit. One cluster is coordinated with 3 cysteines and an exchangeable S-adenosyl-L-methionine.</text>
</comment>
<comment type="pathway">
    <text evidence="1">Protein modification; protein lipoylation via endogenous pathway; protein N(6)-(lipoyl)lysine from octanoyl-[acyl-carrier-protein]: step 2/2.</text>
</comment>
<comment type="subcellular location">
    <subcellularLocation>
        <location evidence="1">Mitochondrion</location>
    </subcellularLocation>
</comment>
<comment type="similarity">
    <text evidence="1">Belongs to the radical SAM superfamily. Lipoyl synthase family.</text>
</comment>